<evidence type="ECO:0000250" key="1"/>
<evidence type="ECO:0000255" key="2">
    <source>
        <dbReference type="PROSITE-ProRule" id="PRU00541"/>
    </source>
</evidence>
<evidence type="ECO:0000255" key="3">
    <source>
        <dbReference type="PROSITE-ProRule" id="PRU00542"/>
    </source>
</evidence>
<evidence type="ECO:0000255" key="4">
    <source>
        <dbReference type="PROSITE-ProRule" id="PRU00552"/>
    </source>
</evidence>
<evidence type="ECO:0000256" key="5">
    <source>
        <dbReference type="SAM" id="MobiDB-lite"/>
    </source>
</evidence>
<evidence type="ECO:0000305" key="6"/>
<dbReference type="EC" id="3.6.4.13"/>
<dbReference type="EMBL" id="CP009807">
    <property type="protein sequence ID" value="ATZ48499.1"/>
    <property type="molecule type" value="Genomic_DNA"/>
</dbReference>
<dbReference type="SMR" id="A6SFW7"/>
<dbReference type="EnsemblFungi" id="Bcin03g07080.1">
    <property type="protein sequence ID" value="Bcin03p07080.1"/>
    <property type="gene ID" value="Bcin03g07080"/>
</dbReference>
<dbReference type="VEuPathDB" id="FungiDB:Bcin03g07080"/>
<dbReference type="OrthoDB" id="196131at2759"/>
<dbReference type="Proteomes" id="UP000001798">
    <property type="component" value="Chromosome bcin03"/>
</dbReference>
<dbReference type="GO" id="GO:0005737">
    <property type="term" value="C:cytoplasm"/>
    <property type="evidence" value="ECO:0007669"/>
    <property type="project" value="UniProtKB-SubCell"/>
</dbReference>
<dbReference type="GO" id="GO:0005634">
    <property type="term" value="C:nucleus"/>
    <property type="evidence" value="ECO:0007669"/>
    <property type="project" value="UniProtKB-SubCell"/>
</dbReference>
<dbReference type="GO" id="GO:0005524">
    <property type="term" value="F:ATP binding"/>
    <property type="evidence" value="ECO:0007669"/>
    <property type="project" value="UniProtKB-KW"/>
</dbReference>
<dbReference type="GO" id="GO:0016887">
    <property type="term" value="F:ATP hydrolysis activity"/>
    <property type="evidence" value="ECO:0007669"/>
    <property type="project" value="RHEA"/>
</dbReference>
<dbReference type="GO" id="GO:0003723">
    <property type="term" value="F:RNA binding"/>
    <property type="evidence" value="ECO:0007669"/>
    <property type="project" value="UniProtKB-KW"/>
</dbReference>
<dbReference type="GO" id="GO:0003724">
    <property type="term" value="F:RNA helicase activity"/>
    <property type="evidence" value="ECO:0007669"/>
    <property type="project" value="UniProtKB-EC"/>
</dbReference>
<dbReference type="GO" id="GO:0000184">
    <property type="term" value="P:nuclear-transcribed mRNA catabolic process, nonsense-mediated decay"/>
    <property type="evidence" value="ECO:0007669"/>
    <property type="project" value="UniProtKB-KW"/>
</dbReference>
<dbReference type="GO" id="GO:0006364">
    <property type="term" value="P:rRNA processing"/>
    <property type="evidence" value="ECO:0007669"/>
    <property type="project" value="UniProtKB-KW"/>
</dbReference>
<dbReference type="CDD" id="cd17966">
    <property type="entry name" value="DEADc_DDX5_DDX17"/>
    <property type="match status" value="1"/>
</dbReference>
<dbReference type="CDD" id="cd18787">
    <property type="entry name" value="SF2_C_DEAD"/>
    <property type="match status" value="1"/>
</dbReference>
<dbReference type="FunFam" id="3.40.50.300:FF:000008">
    <property type="entry name" value="ATP-dependent RNA helicase RhlB"/>
    <property type="match status" value="1"/>
</dbReference>
<dbReference type="FunFam" id="3.40.50.300:FF:000079">
    <property type="entry name" value="probable ATP-dependent RNA helicase DDX17"/>
    <property type="match status" value="1"/>
</dbReference>
<dbReference type="Gene3D" id="3.40.50.300">
    <property type="entry name" value="P-loop containing nucleotide triphosphate hydrolases"/>
    <property type="match status" value="2"/>
</dbReference>
<dbReference type="InterPro" id="IPR011545">
    <property type="entry name" value="DEAD/DEAH_box_helicase_dom"/>
</dbReference>
<dbReference type="InterPro" id="IPR014001">
    <property type="entry name" value="Helicase_ATP-bd"/>
</dbReference>
<dbReference type="InterPro" id="IPR001650">
    <property type="entry name" value="Helicase_C-like"/>
</dbReference>
<dbReference type="InterPro" id="IPR027417">
    <property type="entry name" value="P-loop_NTPase"/>
</dbReference>
<dbReference type="InterPro" id="IPR000629">
    <property type="entry name" value="RNA-helicase_DEAD-box_CS"/>
</dbReference>
<dbReference type="InterPro" id="IPR014014">
    <property type="entry name" value="RNA_helicase_DEAD_Q_motif"/>
</dbReference>
<dbReference type="PANTHER" id="PTHR47958">
    <property type="entry name" value="ATP-DEPENDENT RNA HELICASE DBP3"/>
    <property type="match status" value="1"/>
</dbReference>
<dbReference type="Pfam" id="PF00270">
    <property type="entry name" value="DEAD"/>
    <property type="match status" value="1"/>
</dbReference>
<dbReference type="Pfam" id="PF00271">
    <property type="entry name" value="Helicase_C"/>
    <property type="match status" value="1"/>
</dbReference>
<dbReference type="SMART" id="SM00487">
    <property type="entry name" value="DEXDc"/>
    <property type="match status" value="1"/>
</dbReference>
<dbReference type="SMART" id="SM00490">
    <property type="entry name" value="HELICc"/>
    <property type="match status" value="1"/>
</dbReference>
<dbReference type="SUPFAM" id="SSF52540">
    <property type="entry name" value="P-loop containing nucleoside triphosphate hydrolases"/>
    <property type="match status" value="1"/>
</dbReference>
<dbReference type="PROSITE" id="PS00039">
    <property type="entry name" value="DEAD_ATP_HELICASE"/>
    <property type="match status" value="1"/>
</dbReference>
<dbReference type="PROSITE" id="PS51192">
    <property type="entry name" value="HELICASE_ATP_BIND_1"/>
    <property type="match status" value="1"/>
</dbReference>
<dbReference type="PROSITE" id="PS51194">
    <property type="entry name" value="HELICASE_CTER"/>
    <property type="match status" value="1"/>
</dbReference>
<dbReference type="PROSITE" id="PS51195">
    <property type="entry name" value="Q_MOTIF"/>
    <property type="match status" value="1"/>
</dbReference>
<sequence>MSYGGGYGGGGRGGGNGYGNGDSSYGRGNSYSNGYSNGGSNGYSGGGGGGYGGGRGGGGGGGNVNGYSGGGGGGYGGGGGYGGGGAGGDRMNNLGANLQKQNWDLSTMPKFEKSFYKEDPVVAARSEEDVAKFRAQHNIAVQGPNIPKPVETFDEAGFPAYVMTEVKAQGFPAPTPIQSQGWPMALSGRDVVGIAETGSGKTLTYCLPAIVHINAQPLLAPGDGPIVLVLAPTRELAVQIQQEITKFGKSSRIRNTCVYGGVPKGGQIRDLAKGVEVCIATPGRLIDMIESGKTNLRRVTYLVLDEADRMLDMGFEPQIRKILGQIRPDRQTCMWSATWPKEVRALASDYLNEFIQVNIGSLELSANHRITQIVEVVSEFEKRDKMTKHLEKIMEDKDNKILIFTGTKRVADDITRFLRQDGWPALSIHGDKQQNERDWVLNEFKTGKSPIMVATDVASRGIDVRNITHVFNYDYPNNSEDYIHRIGRTGRAGQKGTAITLFTTDNQKQARDLVNVLTEAKQVIDPRLAEMTRYGGGGGGRGYGGRGYGGGRGRGGGGNFSSSNAAPLGGGRRW</sequence>
<gene>
    <name type="primary">dbp2</name>
    <name type="ORF">BC1G_11725</name>
    <name type="ORF">BCIN_03g07080</name>
</gene>
<keyword id="KW-0067">ATP-binding</keyword>
<keyword id="KW-0963">Cytoplasm</keyword>
<keyword id="KW-0347">Helicase</keyword>
<keyword id="KW-0378">Hydrolase</keyword>
<keyword id="KW-0866">Nonsense-mediated mRNA decay</keyword>
<keyword id="KW-0547">Nucleotide-binding</keyword>
<keyword id="KW-0539">Nucleus</keyword>
<keyword id="KW-1185">Reference proteome</keyword>
<keyword id="KW-0690">Ribosome biogenesis</keyword>
<keyword id="KW-0694">RNA-binding</keyword>
<keyword id="KW-0698">rRNA processing</keyword>
<accession>A6SFW7</accession>
<accession>A0A384JD29</accession>
<organism>
    <name type="scientific">Botryotinia fuckeliana (strain B05.10)</name>
    <name type="common">Noble rot fungus</name>
    <name type="synonym">Botrytis cinerea</name>
    <dbReference type="NCBI Taxonomy" id="332648"/>
    <lineage>
        <taxon>Eukaryota</taxon>
        <taxon>Fungi</taxon>
        <taxon>Dikarya</taxon>
        <taxon>Ascomycota</taxon>
        <taxon>Pezizomycotina</taxon>
        <taxon>Leotiomycetes</taxon>
        <taxon>Helotiales</taxon>
        <taxon>Sclerotiniaceae</taxon>
        <taxon>Botrytis</taxon>
    </lineage>
</organism>
<reference key="1">
    <citation type="journal article" date="2011" name="PLoS Genet.">
        <title>Genomic analysis of the necrotrophic fungal pathogens Sclerotinia sclerotiorum and Botrytis cinerea.</title>
        <authorList>
            <person name="Amselem J."/>
            <person name="Cuomo C.A."/>
            <person name="van Kan J.A.L."/>
            <person name="Viaud M."/>
            <person name="Benito E.P."/>
            <person name="Couloux A."/>
            <person name="Coutinho P.M."/>
            <person name="de Vries R.P."/>
            <person name="Dyer P.S."/>
            <person name="Fillinger S."/>
            <person name="Fournier E."/>
            <person name="Gout L."/>
            <person name="Hahn M."/>
            <person name="Kohn L."/>
            <person name="Lapalu N."/>
            <person name="Plummer K.M."/>
            <person name="Pradier J.-M."/>
            <person name="Quevillon E."/>
            <person name="Sharon A."/>
            <person name="Simon A."/>
            <person name="ten Have A."/>
            <person name="Tudzynski B."/>
            <person name="Tudzynski P."/>
            <person name="Wincker P."/>
            <person name="Andrew M."/>
            <person name="Anthouard V."/>
            <person name="Beever R.E."/>
            <person name="Beffa R."/>
            <person name="Benoit I."/>
            <person name="Bouzid O."/>
            <person name="Brault B."/>
            <person name="Chen Z."/>
            <person name="Choquer M."/>
            <person name="Collemare J."/>
            <person name="Cotton P."/>
            <person name="Danchin E.G."/>
            <person name="Da Silva C."/>
            <person name="Gautier A."/>
            <person name="Giraud C."/>
            <person name="Giraud T."/>
            <person name="Gonzalez C."/>
            <person name="Grossetete S."/>
            <person name="Gueldener U."/>
            <person name="Henrissat B."/>
            <person name="Howlett B.J."/>
            <person name="Kodira C."/>
            <person name="Kretschmer M."/>
            <person name="Lappartient A."/>
            <person name="Leroch M."/>
            <person name="Levis C."/>
            <person name="Mauceli E."/>
            <person name="Neuveglise C."/>
            <person name="Oeser B."/>
            <person name="Pearson M."/>
            <person name="Poulain J."/>
            <person name="Poussereau N."/>
            <person name="Quesneville H."/>
            <person name="Rascle C."/>
            <person name="Schumacher J."/>
            <person name="Segurens B."/>
            <person name="Sexton A."/>
            <person name="Silva E."/>
            <person name="Sirven C."/>
            <person name="Soanes D.M."/>
            <person name="Talbot N.J."/>
            <person name="Templeton M."/>
            <person name="Yandava C."/>
            <person name="Yarden O."/>
            <person name="Zeng Q."/>
            <person name="Rollins J.A."/>
            <person name="Lebrun M.-H."/>
            <person name="Dickman M."/>
        </authorList>
    </citation>
    <scope>NUCLEOTIDE SEQUENCE [LARGE SCALE GENOMIC DNA]</scope>
    <source>
        <strain>B05.10</strain>
    </source>
</reference>
<reference key="2">
    <citation type="journal article" date="2012" name="Eukaryot. Cell">
        <title>Genome update of Botrytis cinerea strains B05.10 and T4.</title>
        <authorList>
            <person name="Staats M."/>
            <person name="van Kan J.A.L."/>
        </authorList>
    </citation>
    <scope>NUCLEOTIDE SEQUENCE [LARGE SCALE GENOMIC DNA]</scope>
    <scope>GENOME REANNOTATION</scope>
    <source>
        <strain>B05.10</strain>
    </source>
</reference>
<reference key="3">
    <citation type="journal article" date="2017" name="Mol. Plant Pathol.">
        <title>A gapless genome sequence of the fungus Botrytis cinerea.</title>
        <authorList>
            <person name="van Kan J.A.L."/>
            <person name="Stassen J.H.M."/>
            <person name="Mosbach A."/>
            <person name="van der Lee T.A.J."/>
            <person name="Faino L."/>
            <person name="Farmer A.D."/>
            <person name="Papasotiriou D.G."/>
            <person name="Zhou S."/>
            <person name="Seidl M.F."/>
            <person name="Cottam E."/>
            <person name="Edel D."/>
            <person name="Hahn M."/>
            <person name="Schwartz D.C."/>
            <person name="Dietrich R.A."/>
            <person name="Widdison S."/>
            <person name="Scalliet G."/>
        </authorList>
    </citation>
    <scope>NUCLEOTIDE SEQUENCE [LARGE SCALE GENOMIC DNA]</scope>
    <scope>GENOME REANNOTATION</scope>
    <source>
        <strain>B05.10</strain>
    </source>
</reference>
<feature type="chain" id="PRO_0000310187" description="ATP-dependent RNA helicase dbp2">
    <location>
        <begin position="1"/>
        <end position="574"/>
    </location>
</feature>
<feature type="domain" description="Helicase ATP-binding" evidence="2">
    <location>
        <begin position="182"/>
        <end position="357"/>
    </location>
</feature>
<feature type="domain" description="Helicase C-terminal" evidence="3">
    <location>
        <begin position="385"/>
        <end position="532"/>
    </location>
</feature>
<feature type="region of interest" description="Disordered" evidence="5">
    <location>
        <begin position="546"/>
        <end position="574"/>
    </location>
</feature>
<feature type="short sequence motif" description="Q motif" evidence="4">
    <location>
        <begin position="151"/>
        <end position="179"/>
    </location>
</feature>
<feature type="short sequence motif" description="DEAD box" evidence="2">
    <location>
        <begin position="305"/>
        <end position="308"/>
    </location>
</feature>
<feature type="compositionally biased region" description="Gly residues" evidence="5">
    <location>
        <begin position="546"/>
        <end position="559"/>
    </location>
</feature>
<feature type="binding site" evidence="2">
    <location>
        <begin position="195"/>
        <end position="202"/>
    </location>
    <ligand>
        <name>ATP</name>
        <dbReference type="ChEBI" id="CHEBI:30616"/>
    </ligand>
</feature>
<protein>
    <recommendedName>
        <fullName>ATP-dependent RNA helicase dbp2</fullName>
        <ecNumber>3.6.4.13</ecNumber>
    </recommendedName>
</protein>
<comment type="function">
    <text evidence="1">ATP-dependent RNA helicase involved nonsense-mediated mRNA decay and ribosome biogenesis through rRNA processing.</text>
</comment>
<comment type="catalytic activity">
    <reaction>
        <text>ATP + H2O = ADP + phosphate + H(+)</text>
        <dbReference type="Rhea" id="RHEA:13065"/>
        <dbReference type="ChEBI" id="CHEBI:15377"/>
        <dbReference type="ChEBI" id="CHEBI:15378"/>
        <dbReference type="ChEBI" id="CHEBI:30616"/>
        <dbReference type="ChEBI" id="CHEBI:43474"/>
        <dbReference type="ChEBI" id="CHEBI:456216"/>
        <dbReference type="EC" id="3.6.4.13"/>
    </reaction>
</comment>
<comment type="subunit">
    <text evidence="1">Associates with polysomes.</text>
</comment>
<comment type="subcellular location">
    <subcellularLocation>
        <location evidence="1">Cytoplasm</location>
    </subcellularLocation>
    <subcellularLocation>
        <location evidence="1">Nucleus</location>
    </subcellularLocation>
</comment>
<comment type="domain">
    <text>The Q motif is unique to and characteristic of the DEAD box family of RNA helicases and controls ATP binding and hydrolysis.</text>
</comment>
<comment type="similarity">
    <text evidence="6">Belongs to the DEAD box helicase family. DDX5/DBP2 subfamily.</text>
</comment>
<name>DBP2_BOTFB</name>
<proteinExistence type="inferred from homology"/>